<sequence length="70" mass="7947">MTKPTKDDELYREMCRVVGKVVLEMRDLGQEPKYIVIAGVLRTALANQRIQRSALEKQAMETVINALARS</sequence>
<evidence type="ECO:0000250" key="1">
    <source>
        <dbReference type="UniProtKB" id="P0ACX5"/>
    </source>
</evidence>
<evidence type="ECO:0000305" key="2"/>
<accession>P0A1T5</accession>
<accession>Q9Z4T1</accession>
<gene>
    <name evidence="1" type="primary">fumD</name>
    <name type="synonym">ydhZ</name>
    <name type="ordered locus">STY1732</name>
    <name type="ordered locus">t1256</name>
</gene>
<name>FUMD_SALTI</name>
<organism>
    <name type="scientific">Salmonella typhi</name>
    <dbReference type="NCBI Taxonomy" id="90370"/>
    <lineage>
        <taxon>Bacteria</taxon>
        <taxon>Pseudomonadati</taxon>
        <taxon>Pseudomonadota</taxon>
        <taxon>Gammaproteobacteria</taxon>
        <taxon>Enterobacterales</taxon>
        <taxon>Enterobacteriaceae</taxon>
        <taxon>Salmonella</taxon>
    </lineage>
</organism>
<protein>
    <recommendedName>
        <fullName evidence="1">Fumarase D</fullName>
        <ecNumber evidence="1">4.2.1.2</ecNumber>
    </recommendedName>
</protein>
<proteinExistence type="inferred from homology"/>
<feature type="chain" id="PRO_0000168986" description="Fumarase D">
    <location>
        <begin position="1"/>
        <end position="70"/>
    </location>
</feature>
<reference key="1">
    <citation type="journal article" date="2001" name="Nature">
        <title>Complete genome sequence of a multiple drug resistant Salmonella enterica serovar Typhi CT18.</title>
        <authorList>
            <person name="Parkhill J."/>
            <person name="Dougan G."/>
            <person name="James K.D."/>
            <person name="Thomson N.R."/>
            <person name="Pickard D."/>
            <person name="Wain J."/>
            <person name="Churcher C.M."/>
            <person name="Mungall K.L."/>
            <person name="Bentley S.D."/>
            <person name="Holden M.T.G."/>
            <person name="Sebaihia M."/>
            <person name="Baker S."/>
            <person name="Basham D."/>
            <person name="Brooks K."/>
            <person name="Chillingworth T."/>
            <person name="Connerton P."/>
            <person name="Cronin A."/>
            <person name="Davis P."/>
            <person name="Davies R.M."/>
            <person name="Dowd L."/>
            <person name="White N."/>
            <person name="Farrar J."/>
            <person name="Feltwell T."/>
            <person name="Hamlin N."/>
            <person name="Haque A."/>
            <person name="Hien T.T."/>
            <person name="Holroyd S."/>
            <person name="Jagels K."/>
            <person name="Krogh A."/>
            <person name="Larsen T.S."/>
            <person name="Leather S."/>
            <person name="Moule S."/>
            <person name="O'Gaora P."/>
            <person name="Parry C."/>
            <person name="Quail M.A."/>
            <person name="Rutherford K.M."/>
            <person name="Simmonds M."/>
            <person name="Skelton J."/>
            <person name="Stevens K."/>
            <person name="Whitehead S."/>
            <person name="Barrell B.G."/>
        </authorList>
    </citation>
    <scope>NUCLEOTIDE SEQUENCE [LARGE SCALE GENOMIC DNA]</scope>
    <source>
        <strain>CT18</strain>
    </source>
</reference>
<reference key="2">
    <citation type="journal article" date="2003" name="J. Bacteriol.">
        <title>Comparative genomics of Salmonella enterica serovar Typhi strains Ty2 and CT18.</title>
        <authorList>
            <person name="Deng W."/>
            <person name="Liou S.-R."/>
            <person name="Plunkett G. III"/>
            <person name="Mayhew G.F."/>
            <person name="Rose D.J."/>
            <person name="Burland V."/>
            <person name="Kodoyianni V."/>
            <person name="Schwartz D.C."/>
            <person name="Blattner F.R."/>
        </authorList>
    </citation>
    <scope>NUCLEOTIDE SEQUENCE [LARGE SCALE GENOMIC DNA]</scope>
    <source>
        <strain>ATCC 700931 / Ty2</strain>
    </source>
</reference>
<keyword id="KW-0456">Lyase</keyword>
<comment type="function">
    <text evidence="1">In vitro catalyzes the addition of water to fumarate, forming malate. Cannot catalyze the reverse reaction. Cannot use the cis-isomer maleate as substrate.</text>
</comment>
<comment type="catalytic activity">
    <reaction evidence="1">
        <text>(S)-malate = fumarate + H2O</text>
        <dbReference type="Rhea" id="RHEA:12460"/>
        <dbReference type="ChEBI" id="CHEBI:15377"/>
        <dbReference type="ChEBI" id="CHEBI:15589"/>
        <dbReference type="ChEBI" id="CHEBI:29806"/>
        <dbReference type="EC" id="4.2.1.2"/>
    </reaction>
</comment>
<comment type="similarity">
    <text evidence="2">Belongs to the FumD family.</text>
</comment>
<dbReference type="EC" id="4.2.1.2" evidence="1"/>
<dbReference type="EMBL" id="AL513382">
    <property type="protein sequence ID" value="CAD01977.1"/>
    <property type="molecule type" value="Genomic_DNA"/>
</dbReference>
<dbReference type="EMBL" id="AE014613">
    <property type="protein sequence ID" value="AAO68908.1"/>
    <property type="molecule type" value="Genomic_DNA"/>
</dbReference>
<dbReference type="RefSeq" id="NP_456140.1">
    <property type="nucleotide sequence ID" value="NC_003198.1"/>
</dbReference>
<dbReference type="RefSeq" id="WP_000165779.1">
    <property type="nucleotide sequence ID" value="NZ_WSUR01000011.1"/>
</dbReference>
<dbReference type="SMR" id="P0A1T5"/>
<dbReference type="STRING" id="220341.gene:17585669"/>
<dbReference type="KEGG" id="stt:t1256"/>
<dbReference type="KEGG" id="sty:STY1732"/>
<dbReference type="PATRIC" id="fig|220341.7.peg.1743"/>
<dbReference type="eggNOG" id="ENOG50347SK">
    <property type="taxonomic scope" value="Bacteria"/>
</dbReference>
<dbReference type="HOGENOM" id="CLU_2755438_0_0_6"/>
<dbReference type="OMA" id="ALYQEMC"/>
<dbReference type="OrthoDB" id="6560929at2"/>
<dbReference type="Proteomes" id="UP000000541">
    <property type="component" value="Chromosome"/>
</dbReference>
<dbReference type="Proteomes" id="UP000002670">
    <property type="component" value="Chromosome"/>
</dbReference>
<dbReference type="GO" id="GO:0004333">
    <property type="term" value="F:fumarate hydratase activity"/>
    <property type="evidence" value="ECO:0007669"/>
    <property type="project" value="UniProtKB-EC"/>
</dbReference>
<dbReference type="InterPro" id="IPR024493">
    <property type="entry name" value="FumD"/>
</dbReference>
<dbReference type="NCBIfam" id="NF007630">
    <property type="entry name" value="PRK10292.1"/>
    <property type="match status" value="1"/>
</dbReference>
<dbReference type="Pfam" id="PF10965">
    <property type="entry name" value="DUF2767"/>
    <property type="match status" value="1"/>
</dbReference>